<dbReference type="EMBL" id="BA000012">
    <property type="protein sequence ID" value="BAB50876.1"/>
    <property type="molecule type" value="Genomic_DNA"/>
</dbReference>
<dbReference type="RefSeq" id="WP_010912218.1">
    <property type="nucleotide sequence ID" value="NC_002678.2"/>
</dbReference>
<dbReference type="SMR" id="Q98EP2"/>
<dbReference type="KEGG" id="mlo:msl4154"/>
<dbReference type="PATRIC" id="fig|266835.9.peg.3280"/>
<dbReference type="eggNOG" id="COG1872">
    <property type="taxonomic scope" value="Bacteria"/>
</dbReference>
<dbReference type="HOGENOM" id="CLU_130694_3_0_5"/>
<dbReference type="Proteomes" id="UP000000552">
    <property type="component" value="Chromosome"/>
</dbReference>
<dbReference type="Gene3D" id="3.30.1200.10">
    <property type="entry name" value="YggU-like"/>
    <property type="match status" value="1"/>
</dbReference>
<dbReference type="HAMAP" id="MF_00634">
    <property type="entry name" value="UPF0235"/>
    <property type="match status" value="1"/>
</dbReference>
<dbReference type="InterPro" id="IPR003746">
    <property type="entry name" value="DUF167"/>
</dbReference>
<dbReference type="InterPro" id="IPR036591">
    <property type="entry name" value="YggU-like_sf"/>
</dbReference>
<dbReference type="NCBIfam" id="TIGR00251">
    <property type="entry name" value="DUF167 family protein"/>
    <property type="match status" value="1"/>
</dbReference>
<dbReference type="NCBIfam" id="NF002348">
    <property type="entry name" value="PRK01310.1"/>
    <property type="match status" value="1"/>
</dbReference>
<dbReference type="Pfam" id="PF02594">
    <property type="entry name" value="DUF167"/>
    <property type="match status" value="1"/>
</dbReference>
<dbReference type="SMART" id="SM01152">
    <property type="entry name" value="DUF167"/>
    <property type="match status" value="1"/>
</dbReference>
<dbReference type="SUPFAM" id="SSF69786">
    <property type="entry name" value="YggU-like"/>
    <property type="match status" value="1"/>
</dbReference>
<evidence type="ECO:0000255" key="1">
    <source>
        <dbReference type="HAMAP-Rule" id="MF_00634"/>
    </source>
</evidence>
<proteinExistence type="inferred from homology"/>
<comment type="similarity">
    <text evidence="1">Belongs to the UPF0235 family.</text>
</comment>
<organism>
    <name type="scientific">Mesorhizobium japonicum (strain LMG 29417 / CECT 9101 / MAFF 303099)</name>
    <name type="common">Mesorhizobium loti (strain MAFF 303099)</name>
    <dbReference type="NCBI Taxonomy" id="266835"/>
    <lineage>
        <taxon>Bacteria</taxon>
        <taxon>Pseudomonadati</taxon>
        <taxon>Pseudomonadota</taxon>
        <taxon>Alphaproteobacteria</taxon>
        <taxon>Hyphomicrobiales</taxon>
        <taxon>Phyllobacteriaceae</taxon>
        <taxon>Mesorhizobium</taxon>
    </lineage>
</organism>
<protein>
    <recommendedName>
        <fullName evidence="1">UPF0235 protein msl4154</fullName>
    </recommendedName>
</protein>
<reference key="1">
    <citation type="journal article" date="2000" name="DNA Res.">
        <title>Complete genome structure of the nitrogen-fixing symbiotic bacterium Mesorhizobium loti.</title>
        <authorList>
            <person name="Kaneko T."/>
            <person name="Nakamura Y."/>
            <person name="Sato S."/>
            <person name="Asamizu E."/>
            <person name="Kato T."/>
            <person name="Sasamoto S."/>
            <person name="Watanabe A."/>
            <person name="Idesawa K."/>
            <person name="Ishikawa A."/>
            <person name="Kawashima K."/>
            <person name="Kimura T."/>
            <person name="Kishida Y."/>
            <person name="Kiyokawa C."/>
            <person name="Kohara M."/>
            <person name="Matsumoto M."/>
            <person name="Matsuno A."/>
            <person name="Mochizuki Y."/>
            <person name="Nakayama S."/>
            <person name="Nakazaki N."/>
            <person name="Shimpo S."/>
            <person name="Sugimoto M."/>
            <person name="Takeuchi C."/>
            <person name="Yamada M."/>
            <person name="Tabata S."/>
        </authorList>
    </citation>
    <scope>NUCLEOTIDE SEQUENCE [LARGE SCALE GENOMIC DNA]</scope>
    <source>
        <strain>LMG 29417 / CECT 9101 / MAFF 303099</strain>
    </source>
</reference>
<accession>Q98EP2</accession>
<sequence length="102" mass="10726">MSAPLRIRENGIDLFVRLTPKSSLDRLEGVETSADGRSHLKARVRAVPENGAANQALERLVAKTLGVPASSVSVVAGGTSRLKTVRIVGDPEALAQRVEALG</sequence>
<gene>
    <name type="ordered locus">msl4154</name>
</gene>
<feature type="chain" id="PRO_0000139450" description="UPF0235 protein msl4154">
    <location>
        <begin position="1"/>
        <end position="102"/>
    </location>
</feature>
<name>Y4154_RHILO</name>